<reference key="1">
    <citation type="journal article" date="1998" name="Nature">
        <title>The genome sequence of Rickettsia prowazekii and the origin of mitochondria.</title>
        <authorList>
            <person name="Andersson S.G.E."/>
            <person name="Zomorodipour A."/>
            <person name="Andersson J.O."/>
            <person name="Sicheritz-Ponten T."/>
            <person name="Alsmark U.C.M."/>
            <person name="Podowski R.M."/>
            <person name="Naeslund A.K."/>
            <person name="Eriksson A.-S."/>
            <person name="Winkler H.H."/>
            <person name="Kurland C.G."/>
        </authorList>
    </citation>
    <scope>NUCLEOTIDE SEQUENCE [LARGE SCALE GENOMIC DNA]</scope>
    <source>
        <strain>Madrid E</strain>
    </source>
</reference>
<dbReference type="EMBL" id="AJ235272">
    <property type="protein sequence ID" value="CAA15035.1"/>
    <property type="molecule type" value="Genomic_DNA"/>
</dbReference>
<dbReference type="PIR" id="A71664">
    <property type="entry name" value="A71664"/>
</dbReference>
<dbReference type="RefSeq" id="NP_220959.1">
    <property type="nucleotide sequence ID" value="NC_000963.1"/>
</dbReference>
<dbReference type="RefSeq" id="WP_010886330.1">
    <property type="nucleotide sequence ID" value="NC_000963.1"/>
</dbReference>
<dbReference type="SMR" id="Q9ZCW4"/>
<dbReference type="STRING" id="272947.gene:17555670"/>
<dbReference type="EnsemblBacteria" id="CAA15035">
    <property type="protein sequence ID" value="CAA15035"/>
    <property type="gene ID" value="CAA15035"/>
</dbReference>
<dbReference type="GeneID" id="57569716"/>
<dbReference type="KEGG" id="rpr:RP590"/>
<dbReference type="PATRIC" id="fig|272947.5.peg.607"/>
<dbReference type="eggNOG" id="COG0728">
    <property type="taxonomic scope" value="Bacteria"/>
</dbReference>
<dbReference type="HOGENOM" id="CLU_006797_5_0_5"/>
<dbReference type="OrthoDB" id="9816572at2"/>
<dbReference type="UniPathway" id="UPA00219"/>
<dbReference type="Proteomes" id="UP000002480">
    <property type="component" value="Chromosome"/>
</dbReference>
<dbReference type="GO" id="GO:0005886">
    <property type="term" value="C:plasma membrane"/>
    <property type="evidence" value="ECO:0007669"/>
    <property type="project" value="UniProtKB-SubCell"/>
</dbReference>
<dbReference type="GO" id="GO:0015648">
    <property type="term" value="F:lipid-linked peptidoglycan transporter activity"/>
    <property type="evidence" value="ECO:0007669"/>
    <property type="project" value="UniProtKB-UniRule"/>
</dbReference>
<dbReference type="GO" id="GO:0071555">
    <property type="term" value="P:cell wall organization"/>
    <property type="evidence" value="ECO:0007669"/>
    <property type="project" value="UniProtKB-KW"/>
</dbReference>
<dbReference type="GO" id="GO:0034204">
    <property type="term" value="P:lipid translocation"/>
    <property type="evidence" value="ECO:0007669"/>
    <property type="project" value="TreeGrafter"/>
</dbReference>
<dbReference type="GO" id="GO:0009252">
    <property type="term" value="P:peptidoglycan biosynthetic process"/>
    <property type="evidence" value="ECO:0007669"/>
    <property type="project" value="UniProtKB-UniRule"/>
</dbReference>
<dbReference type="GO" id="GO:0008360">
    <property type="term" value="P:regulation of cell shape"/>
    <property type="evidence" value="ECO:0007669"/>
    <property type="project" value="UniProtKB-KW"/>
</dbReference>
<dbReference type="CDD" id="cd13123">
    <property type="entry name" value="MATE_MurJ_like"/>
    <property type="match status" value="1"/>
</dbReference>
<dbReference type="HAMAP" id="MF_02078">
    <property type="entry name" value="MurJ_MviN"/>
    <property type="match status" value="1"/>
</dbReference>
<dbReference type="InterPro" id="IPR051050">
    <property type="entry name" value="Lipid_II_flippase_MurJ/MviN"/>
</dbReference>
<dbReference type="InterPro" id="IPR004268">
    <property type="entry name" value="MurJ"/>
</dbReference>
<dbReference type="NCBIfam" id="TIGR01695">
    <property type="entry name" value="murJ_mviN"/>
    <property type="match status" value="1"/>
</dbReference>
<dbReference type="PANTHER" id="PTHR47019">
    <property type="entry name" value="LIPID II FLIPPASE MURJ"/>
    <property type="match status" value="1"/>
</dbReference>
<dbReference type="PANTHER" id="PTHR47019:SF1">
    <property type="entry name" value="LIPID II FLIPPASE MURJ"/>
    <property type="match status" value="1"/>
</dbReference>
<dbReference type="Pfam" id="PF03023">
    <property type="entry name" value="MurJ"/>
    <property type="match status" value="1"/>
</dbReference>
<dbReference type="PIRSF" id="PIRSF002869">
    <property type="entry name" value="MviN"/>
    <property type="match status" value="1"/>
</dbReference>
<dbReference type="PRINTS" id="PR01806">
    <property type="entry name" value="VIRFACTRMVIN"/>
</dbReference>
<accession>Q9ZCW4</accession>
<proteinExistence type="inferred from homology"/>
<organism>
    <name type="scientific">Rickettsia prowazekii (strain Madrid E)</name>
    <dbReference type="NCBI Taxonomy" id="272947"/>
    <lineage>
        <taxon>Bacteria</taxon>
        <taxon>Pseudomonadati</taxon>
        <taxon>Pseudomonadota</taxon>
        <taxon>Alphaproteobacteria</taxon>
        <taxon>Rickettsiales</taxon>
        <taxon>Rickettsiaceae</taxon>
        <taxon>Rickettsieae</taxon>
        <taxon>Rickettsia</taxon>
        <taxon>typhus group</taxon>
    </lineage>
</organism>
<evidence type="ECO:0000255" key="1">
    <source>
        <dbReference type="HAMAP-Rule" id="MF_02078"/>
    </source>
</evidence>
<keyword id="KW-0997">Cell inner membrane</keyword>
<keyword id="KW-1003">Cell membrane</keyword>
<keyword id="KW-0133">Cell shape</keyword>
<keyword id="KW-0961">Cell wall biogenesis/degradation</keyword>
<keyword id="KW-0472">Membrane</keyword>
<keyword id="KW-0573">Peptidoglycan synthesis</keyword>
<keyword id="KW-1185">Reference proteome</keyword>
<keyword id="KW-0812">Transmembrane</keyword>
<keyword id="KW-1133">Transmembrane helix</keyword>
<keyword id="KW-0813">Transport</keyword>
<feature type="chain" id="PRO_0000182013" description="Probable lipid II flippase MurJ">
    <location>
        <begin position="1"/>
        <end position="507"/>
    </location>
</feature>
<feature type="transmembrane region" description="Helical" evidence="1">
    <location>
        <begin position="3"/>
        <end position="23"/>
    </location>
</feature>
<feature type="transmembrane region" description="Helical" evidence="1">
    <location>
        <begin position="54"/>
        <end position="74"/>
    </location>
</feature>
<feature type="transmembrane region" description="Helical" evidence="1">
    <location>
        <begin position="92"/>
        <end position="112"/>
    </location>
</feature>
<feature type="transmembrane region" description="Helical" evidence="1">
    <location>
        <begin position="132"/>
        <end position="152"/>
    </location>
</feature>
<feature type="transmembrane region" description="Helical" evidence="1">
    <location>
        <begin position="156"/>
        <end position="176"/>
    </location>
</feature>
<feature type="transmembrane region" description="Helical" evidence="1">
    <location>
        <begin position="185"/>
        <end position="205"/>
    </location>
</feature>
<feature type="transmembrane region" description="Helical" evidence="1">
    <location>
        <begin position="268"/>
        <end position="288"/>
    </location>
</feature>
<feature type="transmembrane region" description="Helical" evidence="1">
    <location>
        <begin position="310"/>
        <end position="330"/>
    </location>
</feature>
<feature type="transmembrane region" description="Helical" evidence="1">
    <location>
        <begin position="351"/>
        <end position="371"/>
    </location>
</feature>
<feature type="transmembrane region" description="Helical" evidence="1">
    <location>
        <begin position="379"/>
        <end position="399"/>
    </location>
</feature>
<feature type="transmembrane region" description="Helical" evidence="1">
    <location>
        <begin position="405"/>
        <end position="425"/>
    </location>
</feature>
<feature type="transmembrane region" description="Helical" evidence="1">
    <location>
        <begin position="438"/>
        <end position="458"/>
    </location>
</feature>
<feature type="transmembrane region" description="Helical" evidence="1">
    <location>
        <begin position="472"/>
        <end position="492"/>
    </location>
</feature>
<protein>
    <recommendedName>
        <fullName evidence="1">Probable lipid II flippase MurJ</fullName>
    </recommendedName>
</protein>
<gene>
    <name evidence="1" type="primary">murJ</name>
    <name type="synonym">mviN</name>
    <name type="ordered locus">RP590</name>
</gene>
<comment type="function">
    <text evidence="1">Involved in peptidoglycan biosynthesis. Transports lipid-linked peptidoglycan precursors from the inner to the outer leaflet of the cytoplasmic membrane.</text>
</comment>
<comment type="pathway">
    <text evidence="1">Cell wall biogenesis; peptidoglycan biosynthesis.</text>
</comment>
<comment type="subcellular location">
    <subcellularLocation>
        <location evidence="1">Cell inner membrane</location>
        <topology evidence="1">Multi-pass membrane protein</topology>
    </subcellularLocation>
</comment>
<comment type="similarity">
    <text evidence="1">Belongs to the MurJ/MviN family.</text>
</comment>
<name>MURJ_RICPR</name>
<sequence length="507" mass="56059">MTLFRSGIILAFLTFIARIFGLVREQFIASLFGSTPMGDSMNIAFKLPNLFRRIFAEGALSSVFIPIYNEKMLISKKAANNFSGKVFTLLSLTLIVIIALMQIFMPQLILCIAPGFYAKKEKFELTVFLCRITIPYLIFVSLTALLGGILNSVKKFAAFAFSPIILSVCVIIFTLIFGNYIESTISISVSLIIAGILQVVFMFICVKKADLHFPIIFHTNDPDVKKLLINMGPATISSGVQQLNLFISQSISSFIEGAISILAYADRIYQFPLSIIGTSFSTILLPEMSKVYKSNDIVSAQKIQNNAIRIGLLLSLPATFGIIILSHPITNIIYERGVFTPQDTTNTAEAISAFALGLPAFILAKILTPIFYANGDTKTPLKITLFSIIINTNMNLLLMDSLKHIGIAVGTSIAAWYNLGLLYSYSTKQHKLHIEAGIKLFCAKILLCCTLMSIIIALIKHYYLEYLYSEYLLIKVSMLGSTIIIGVAIFFGTAYLLKVVNYDNSTK</sequence>